<reference key="1">
    <citation type="journal article" date="1995" name="Yeast">
        <title>The sequence of a 13.5 kb DNA segment from the left arm of yeast chromosome XIV reveals MER1; RAP1; a new putative member of the DNA replication complex and a new putative serine/threonine phosphatase gene.</title>
        <authorList>
            <person name="Coster F."/>
            <person name="van Dyck L."/>
            <person name="Jonniaux J.-L."/>
            <person name="Purnelle B."/>
            <person name="Goffeau A."/>
        </authorList>
    </citation>
    <scope>NUCLEOTIDE SEQUENCE [GENOMIC DNA]</scope>
    <source>
        <strain>ATCC 96604 / S288c / FY1679</strain>
    </source>
</reference>
<reference key="2">
    <citation type="journal article" date="1997" name="Nature">
        <title>The nucleotide sequence of Saccharomyces cerevisiae chromosome XIV and its evolutionary implications.</title>
        <authorList>
            <person name="Philippsen P."/>
            <person name="Kleine K."/>
            <person name="Poehlmann R."/>
            <person name="Duesterhoeft A."/>
            <person name="Hamberg K."/>
            <person name="Hegemann J.H."/>
            <person name="Obermaier B."/>
            <person name="Urrestarazu L.A."/>
            <person name="Aert R."/>
            <person name="Albermann K."/>
            <person name="Altmann R."/>
            <person name="Andre B."/>
            <person name="Baladron V."/>
            <person name="Ballesta J.P.G."/>
            <person name="Becam A.-M."/>
            <person name="Beinhauer J.D."/>
            <person name="Boskovic J."/>
            <person name="Buitrago M.J."/>
            <person name="Bussereau F."/>
            <person name="Coster F."/>
            <person name="Crouzet M."/>
            <person name="D'Angelo M."/>
            <person name="Dal Pero F."/>
            <person name="De Antoni A."/>
            <person name="del Rey F."/>
            <person name="Doignon F."/>
            <person name="Domdey H."/>
            <person name="Dubois E."/>
            <person name="Fiedler T.A."/>
            <person name="Fleig U."/>
            <person name="Floeth M."/>
            <person name="Fritz C."/>
            <person name="Gaillardin C."/>
            <person name="Garcia-Cantalejo J.M."/>
            <person name="Glansdorff N."/>
            <person name="Goffeau A."/>
            <person name="Gueldener U."/>
            <person name="Herbert C.J."/>
            <person name="Heumann K."/>
            <person name="Heuss-Neitzel D."/>
            <person name="Hilbert H."/>
            <person name="Hinni K."/>
            <person name="Iraqui Houssaini I."/>
            <person name="Jacquet M."/>
            <person name="Jimenez A."/>
            <person name="Jonniaux J.-L."/>
            <person name="Karpfinger-Hartl L."/>
            <person name="Lanfranchi G."/>
            <person name="Lepingle A."/>
            <person name="Levesque H."/>
            <person name="Lyck R."/>
            <person name="Maftahi M."/>
            <person name="Mallet L."/>
            <person name="Maurer C.T.C."/>
            <person name="Messenguy F."/>
            <person name="Mewes H.-W."/>
            <person name="Moestl D."/>
            <person name="Nasr F."/>
            <person name="Nicaud J.-M."/>
            <person name="Niedenthal R.K."/>
            <person name="Pandolfo D."/>
            <person name="Pierard A."/>
            <person name="Piravandi E."/>
            <person name="Planta R.J."/>
            <person name="Pohl T.M."/>
            <person name="Purnelle B."/>
            <person name="Rebischung C."/>
            <person name="Remacha M.A."/>
            <person name="Revuelta J.L."/>
            <person name="Rinke M."/>
            <person name="Saiz J.E."/>
            <person name="Sartorello F."/>
            <person name="Scherens B."/>
            <person name="Sen-Gupta M."/>
            <person name="Soler-Mira A."/>
            <person name="Urbanus J.H.M."/>
            <person name="Valle G."/>
            <person name="Van Dyck L."/>
            <person name="Verhasselt P."/>
            <person name="Vierendeels F."/>
            <person name="Vissers S."/>
            <person name="Voet M."/>
            <person name="Volckaert G."/>
            <person name="Wach A."/>
            <person name="Wambutt R."/>
            <person name="Wedler H."/>
            <person name="Zollner A."/>
            <person name="Hani J."/>
        </authorList>
    </citation>
    <scope>NUCLEOTIDE SEQUENCE [LARGE SCALE GENOMIC DNA]</scope>
    <source>
        <strain>ATCC 204508 / S288c</strain>
    </source>
</reference>
<reference key="3">
    <citation type="journal article" date="2014" name="G3 (Bethesda)">
        <title>The reference genome sequence of Saccharomyces cerevisiae: Then and now.</title>
        <authorList>
            <person name="Engel S.R."/>
            <person name="Dietrich F.S."/>
            <person name="Fisk D.G."/>
            <person name="Binkley G."/>
            <person name="Balakrishnan R."/>
            <person name="Costanzo M.C."/>
            <person name="Dwight S.S."/>
            <person name="Hitz B.C."/>
            <person name="Karra K."/>
            <person name="Nash R.S."/>
            <person name="Weng S."/>
            <person name="Wong E.D."/>
            <person name="Lloyd P."/>
            <person name="Skrzypek M.S."/>
            <person name="Miyasato S.R."/>
            <person name="Simison M."/>
            <person name="Cherry J.M."/>
        </authorList>
    </citation>
    <scope>GENOME REANNOTATION</scope>
    <source>
        <strain>ATCC 204508 / S288c</strain>
    </source>
</reference>
<reference key="4">
    <citation type="journal article" date="2003" name="Nature">
        <title>Global analysis of protein localization in budding yeast.</title>
        <authorList>
            <person name="Huh W.-K."/>
            <person name="Falvo J.V."/>
            <person name="Gerke L.C."/>
            <person name="Carroll A.S."/>
            <person name="Howson R.W."/>
            <person name="Weissman J.S."/>
            <person name="O'Shea E.K."/>
        </authorList>
    </citation>
    <scope>SUBCELLULAR LOCATION [LARGE SCALE ANALYSIS]</scope>
</reference>
<reference key="5">
    <citation type="journal article" date="2003" name="Nature">
        <title>Global analysis of protein expression in yeast.</title>
        <authorList>
            <person name="Ghaemmaghami S."/>
            <person name="Huh W.-K."/>
            <person name="Bower K."/>
            <person name="Howson R.W."/>
            <person name="Belle A."/>
            <person name="Dephoure N."/>
            <person name="O'Shea E.K."/>
            <person name="Weissman J.S."/>
        </authorList>
    </citation>
    <scope>LEVEL OF PROTEIN EXPRESSION [LARGE SCALE ANALYSIS]</scope>
</reference>
<reference key="6">
    <citation type="journal article" date="2003" name="Mol. Cell">
        <title>Involvement of actin-related proteins in ATP-dependent chromatin remodeling.</title>
        <authorList>
            <person name="Shen X."/>
            <person name="Ranallo R."/>
            <person name="Choi E."/>
            <person name="Wu C."/>
        </authorList>
    </citation>
    <scope>IDENTIFICATION IN THE INO80 COMPLEX</scope>
</reference>
<reference key="7">
    <citation type="journal article" date="2007" name="Proc. Natl. Acad. Sci. U.S.A.">
        <title>Analysis of phosphorylation sites on proteins from Saccharomyces cerevisiae by electron transfer dissociation (ETD) mass spectrometry.</title>
        <authorList>
            <person name="Chi A."/>
            <person name="Huttenhower C."/>
            <person name="Geer L.Y."/>
            <person name="Coon J.J."/>
            <person name="Syka J.E.P."/>
            <person name="Bai D.L."/>
            <person name="Shabanowitz J."/>
            <person name="Burke D.J."/>
            <person name="Troyanskaya O.G."/>
            <person name="Hunt D.F."/>
        </authorList>
    </citation>
    <scope>IDENTIFICATION BY MASS SPECTROMETRY [LARGE SCALE ANALYSIS]</scope>
</reference>
<reference key="8">
    <citation type="journal article" date="2008" name="Mol. Cell. Proteomics">
        <title>A multidimensional chromatography technology for in-depth phosphoproteome analysis.</title>
        <authorList>
            <person name="Albuquerque C.P."/>
            <person name="Smolka M.B."/>
            <person name="Payne S.H."/>
            <person name="Bafna V."/>
            <person name="Eng J."/>
            <person name="Zhou H."/>
        </authorList>
    </citation>
    <scope>PHOSPHORYLATION [LARGE SCALE ANALYSIS] AT SER-67</scope>
    <scope>IDENTIFICATION BY MASS SPECTROMETRY [LARGE SCALE ANALYSIS]</scope>
</reference>
<reference key="9">
    <citation type="journal article" date="2009" name="Science">
        <title>Global analysis of Cdk1 substrate phosphorylation sites provides insights into evolution.</title>
        <authorList>
            <person name="Holt L.J."/>
            <person name="Tuch B.B."/>
            <person name="Villen J."/>
            <person name="Johnson A.D."/>
            <person name="Gygi S.P."/>
            <person name="Morgan D.O."/>
        </authorList>
    </citation>
    <scope>PHOSPHORYLATION [LARGE SCALE ANALYSIS] AT SER-129</scope>
    <scope>IDENTIFICATION BY MASS SPECTROMETRY [LARGE SCALE ANALYSIS]</scope>
</reference>
<accession>P40154</accession>
<accession>D6W0X5</accession>
<sequence length="320" mass="36154">MDSEASDIEAELSDSVSAGGEEYIDDDDYTEDIDDQIVTAKSSRRTARRSVPKGVRTSKRIRDKELSVEVDEDYDEEEDVLSPSKKRHLHTRSMDKRQVAATASEKSDIGDSKGNDGEIEDGILEEEESLEKELNRGGGKEVEKSEESYYAQNDVGQKGEEEQDGESGGYEDNEPSISKESDELVSVVNGNGNEEDDEVEATKENTTDSTRSTTTRSKMLLDLLEDGGSKKKLTDEEIQLRRAENARKRKNLSEKRLEEEKQDTINKLLKKRAGKSRSHLPNDDEKNDGSSSFVKPRRPYNSEGMTRILRRYEEDLFCTF</sequence>
<keyword id="KW-0002">3D-structure</keyword>
<keyword id="KW-0156">Chromatin regulator</keyword>
<keyword id="KW-0227">DNA damage</keyword>
<keyword id="KW-0234">DNA repair</keyword>
<keyword id="KW-0238">DNA-binding</keyword>
<keyword id="KW-0539">Nucleus</keyword>
<keyword id="KW-0597">Phosphoprotein</keyword>
<keyword id="KW-1185">Reference proteome</keyword>
<keyword id="KW-0804">Transcription</keyword>
<keyword id="KW-0805">Transcription regulation</keyword>
<protein>
    <recommendedName>
        <fullName>Ino eighty subunit 2</fullName>
    </recommendedName>
</protein>
<name>IES2_YEAST</name>
<feature type="chain" id="PRO_0000084154" description="Ino eighty subunit 2">
    <location>
        <begin position="1"/>
        <end position="320"/>
    </location>
</feature>
<feature type="region of interest" description="Disordered" evidence="1">
    <location>
        <begin position="1"/>
        <end position="232"/>
    </location>
</feature>
<feature type="region of interest" description="Disordered" evidence="1">
    <location>
        <begin position="244"/>
        <end position="306"/>
    </location>
</feature>
<feature type="compositionally biased region" description="Acidic residues" evidence="1">
    <location>
        <begin position="1"/>
        <end position="12"/>
    </location>
</feature>
<feature type="compositionally biased region" description="Acidic residues" evidence="1">
    <location>
        <begin position="22"/>
        <end position="35"/>
    </location>
</feature>
<feature type="compositionally biased region" description="Basic residues" evidence="1">
    <location>
        <begin position="42"/>
        <end position="59"/>
    </location>
</feature>
<feature type="compositionally biased region" description="Acidic residues" evidence="1">
    <location>
        <begin position="68"/>
        <end position="80"/>
    </location>
</feature>
<feature type="compositionally biased region" description="Basic and acidic residues" evidence="1">
    <location>
        <begin position="105"/>
        <end position="116"/>
    </location>
</feature>
<feature type="compositionally biased region" description="Acidic residues" evidence="1">
    <location>
        <begin position="117"/>
        <end position="130"/>
    </location>
</feature>
<feature type="compositionally biased region" description="Basic and acidic residues" evidence="1">
    <location>
        <begin position="131"/>
        <end position="147"/>
    </location>
</feature>
<feature type="compositionally biased region" description="Acidic residues" evidence="1">
    <location>
        <begin position="161"/>
        <end position="174"/>
    </location>
</feature>
<feature type="compositionally biased region" description="Low complexity" evidence="1">
    <location>
        <begin position="207"/>
        <end position="217"/>
    </location>
</feature>
<feature type="compositionally biased region" description="Basic and acidic residues" evidence="1">
    <location>
        <begin position="244"/>
        <end position="264"/>
    </location>
</feature>
<feature type="compositionally biased region" description="Basic residues" evidence="1">
    <location>
        <begin position="268"/>
        <end position="278"/>
    </location>
</feature>
<feature type="modified residue" description="Phosphoserine" evidence="6">
    <location>
        <position position="67"/>
    </location>
</feature>
<feature type="modified residue" description="Phosphoserine" evidence="7">
    <location>
        <position position="129"/>
    </location>
</feature>
<gene>
    <name type="primary">IES2</name>
    <name type="ordered locus">YNL215W</name>
    <name type="ORF">N1315</name>
</gene>
<proteinExistence type="evidence at protein level"/>
<evidence type="ECO:0000256" key="1">
    <source>
        <dbReference type="SAM" id="MobiDB-lite"/>
    </source>
</evidence>
<evidence type="ECO:0000269" key="2">
    <source>
    </source>
</evidence>
<evidence type="ECO:0000269" key="3">
    <source>
    </source>
</evidence>
<evidence type="ECO:0000269" key="4">
    <source>
    </source>
</evidence>
<evidence type="ECO:0000305" key="5"/>
<evidence type="ECO:0007744" key="6">
    <source>
    </source>
</evidence>
<evidence type="ECO:0007744" key="7">
    <source>
    </source>
</evidence>
<comment type="function">
    <text>Component of the INO80 complex which remodels chromatin by shifting nucleosomes and is involved in DNA repair.</text>
</comment>
<comment type="subunit">
    <text evidence="2">Component of the chromatin-remodeling INO80 complex, at least composed of ARP4, ARP5, ARP8, RVB1, RVB2, TAF14, NHP10, IES1, IES3, IES4, IES6, ACT1, IES2, IES5 and INO80.</text>
</comment>
<comment type="subcellular location">
    <subcellularLocation>
        <location evidence="3">Nucleus</location>
    </subcellularLocation>
</comment>
<comment type="miscellaneous">
    <text evidence="4">Present with 1470 molecules/cell in log phase SD medium.</text>
</comment>
<comment type="similarity">
    <text evidence="5">Belongs to the IES2 family.</text>
</comment>
<dbReference type="EMBL" id="X78898">
    <property type="protein sequence ID" value="CAA55493.1"/>
    <property type="molecule type" value="Genomic_DNA"/>
</dbReference>
<dbReference type="EMBL" id="Z71491">
    <property type="protein sequence ID" value="CAA96117.1"/>
    <property type="molecule type" value="Genomic_DNA"/>
</dbReference>
<dbReference type="EMBL" id="BK006947">
    <property type="protein sequence ID" value="DAA10341.1"/>
    <property type="molecule type" value="Genomic_DNA"/>
</dbReference>
<dbReference type="PIR" id="S50716">
    <property type="entry name" value="S50716"/>
</dbReference>
<dbReference type="RefSeq" id="NP_014184.1">
    <property type="nucleotide sequence ID" value="NM_001183053.1"/>
</dbReference>
<dbReference type="PDB" id="8ETS">
    <property type="method" value="EM"/>
    <property type="resolution" value="3.04 A"/>
    <property type="chains" value="Z=293-320"/>
</dbReference>
<dbReference type="PDB" id="8ETU">
    <property type="method" value="EM"/>
    <property type="resolution" value="2.80 A"/>
    <property type="chains" value="Z=293-320"/>
</dbReference>
<dbReference type="PDB" id="8ETW">
    <property type="method" value="EM"/>
    <property type="resolution" value="2.64 A"/>
    <property type="chains" value="Z=293-320"/>
</dbReference>
<dbReference type="PDB" id="8EU9">
    <property type="method" value="EM"/>
    <property type="resolution" value="3.48 A"/>
    <property type="chains" value="Z=293-320"/>
</dbReference>
<dbReference type="PDB" id="8EUF">
    <property type="method" value="EM"/>
    <property type="resolution" value="3.41 A"/>
    <property type="chains" value="Z=1-320"/>
</dbReference>
<dbReference type="PDBsum" id="8ETS"/>
<dbReference type="PDBsum" id="8ETU"/>
<dbReference type="PDBsum" id="8ETW"/>
<dbReference type="PDBsum" id="8EU9"/>
<dbReference type="PDBsum" id="8EUF"/>
<dbReference type="EMDB" id="EMD-28597"/>
<dbReference type="EMDB" id="EMD-28599"/>
<dbReference type="EMDB" id="EMD-28601"/>
<dbReference type="EMDB" id="EMD-28609"/>
<dbReference type="EMDB" id="EMD-28613"/>
<dbReference type="SMR" id="P40154"/>
<dbReference type="BioGRID" id="35621">
    <property type="interactions" value="366"/>
</dbReference>
<dbReference type="ComplexPortal" id="CPX-863">
    <property type="entry name" value="INO80 chromatin remodeling complex"/>
</dbReference>
<dbReference type="DIP" id="DIP-5062N"/>
<dbReference type="FunCoup" id="P40154">
    <property type="interactions" value="78"/>
</dbReference>
<dbReference type="IntAct" id="P40154">
    <property type="interactions" value="24"/>
</dbReference>
<dbReference type="MINT" id="P40154"/>
<dbReference type="STRING" id="4932.YNL215W"/>
<dbReference type="iPTMnet" id="P40154"/>
<dbReference type="PaxDb" id="4932-YNL215W"/>
<dbReference type="PeptideAtlas" id="P40154"/>
<dbReference type="EnsemblFungi" id="YNL215W_mRNA">
    <property type="protein sequence ID" value="YNL215W"/>
    <property type="gene ID" value="YNL215W"/>
</dbReference>
<dbReference type="GeneID" id="855506"/>
<dbReference type="KEGG" id="sce:YNL215W"/>
<dbReference type="AGR" id="SGD:S000005159"/>
<dbReference type="SGD" id="S000005159">
    <property type="gene designation" value="IES2"/>
</dbReference>
<dbReference type="VEuPathDB" id="FungiDB:YNL215W"/>
<dbReference type="eggNOG" id="ENOG502S7M7">
    <property type="taxonomic scope" value="Eukaryota"/>
</dbReference>
<dbReference type="HOGENOM" id="CLU_066892_0_0_1"/>
<dbReference type="InParanoid" id="P40154"/>
<dbReference type="OMA" id="YEEDLFC"/>
<dbReference type="OrthoDB" id="2021186at2759"/>
<dbReference type="BioCyc" id="YEAST:G3O-33221-MONOMER"/>
<dbReference type="BioGRID-ORCS" id="855506">
    <property type="hits" value="1 hit in 10 CRISPR screens"/>
</dbReference>
<dbReference type="PRO" id="PR:P40154"/>
<dbReference type="Proteomes" id="UP000002311">
    <property type="component" value="Chromosome XIV"/>
</dbReference>
<dbReference type="RNAct" id="P40154">
    <property type="molecule type" value="protein"/>
</dbReference>
<dbReference type="GO" id="GO:0031011">
    <property type="term" value="C:Ino80 complex"/>
    <property type="evidence" value="ECO:0000353"/>
    <property type="project" value="ComplexPortal"/>
</dbReference>
<dbReference type="GO" id="GO:0005634">
    <property type="term" value="C:nucleus"/>
    <property type="evidence" value="ECO:0000314"/>
    <property type="project" value="ComplexPortal"/>
</dbReference>
<dbReference type="GO" id="GO:0003677">
    <property type="term" value="F:DNA binding"/>
    <property type="evidence" value="ECO:0007669"/>
    <property type="project" value="UniProtKB-KW"/>
</dbReference>
<dbReference type="GO" id="GO:0006338">
    <property type="term" value="P:chromatin remodeling"/>
    <property type="evidence" value="ECO:0000314"/>
    <property type="project" value="ComplexPortal"/>
</dbReference>
<dbReference type="GO" id="GO:0006281">
    <property type="term" value="P:DNA repair"/>
    <property type="evidence" value="ECO:0000303"/>
    <property type="project" value="ComplexPortal"/>
</dbReference>
<dbReference type="GO" id="GO:0006355">
    <property type="term" value="P:regulation of DNA-templated transcription"/>
    <property type="evidence" value="ECO:0000303"/>
    <property type="project" value="ComplexPortal"/>
</dbReference>
<dbReference type="InterPro" id="IPR029523">
    <property type="entry name" value="INO80B/Ies2"/>
</dbReference>
<dbReference type="InterPro" id="IPR006880">
    <property type="entry name" value="INO80B_C"/>
</dbReference>
<dbReference type="PANTHER" id="PTHR21561">
    <property type="entry name" value="INO80 COMPLEX SUBUNIT B"/>
    <property type="match status" value="1"/>
</dbReference>
<dbReference type="PANTHER" id="PTHR21561:SF12">
    <property type="entry name" value="INO80 COMPLEX SUBUNIT B"/>
    <property type="match status" value="1"/>
</dbReference>
<dbReference type="Pfam" id="PF04795">
    <property type="entry name" value="PAPA-1"/>
    <property type="match status" value="1"/>
</dbReference>
<dbReference type="SMART" id="SM01406">
    <property type="entry name" value="PAPA-1"/>
    <property type="match status" value="1"/>
</dbReference>
<organism>
    <name type="scientific">Saccharomyces cerevisiae (strain ATCC 204508 / S288c)</name>
    <name type="common">Baker's yeast</name>
    <dbReference type="NCBI Taxonomy" id="559292"/>
    <lineage>
        <taxon>Eukaryota</taxon>
        <taxon>Fungi</taxon>
        <taxon>Dikarya</taxon>
        <taxon>Ascomycota</taxon>
        <taxon>Saccharomycotina</taxon>
        <taxon>Saccharomycetes</taxon>
        <taxon>Saccharomycetales</taxon>
        <taxon>Saccharomycetaceae</taxon>
        <taxon>Saccharomyces</taxon>
    </lineage>
</organism>